<dbReference type="EMBL" id="AF053950">
    <property type="protein sequence ID" value="AAC77442.1"/>
    <property type="molecule type" value="Genomic_DNA"/>
</dbReference>
<dbReference type="EMBL" id="AB025797">
    <property type="protein sequence ID" value="BAB40441.1"/>
    <property type="molecule type" value="mRNA"/>
</dbReference>
<dbReference type="BMRB" id="Q9Z2J9"/>
<dbReference type="SMR" id="Q9Z2J9"/>
<dbReference type="CORUM" id="Q9Z2J9"/>
<dbReference type="DIP" id="DIP-60266N"/>
<dbReference type="FunCoup" id="Q9Z2J9">
    <property type="interactions" value="3"/>
</dbReference>
<dbReference type="IntAct" id="Q9Z2J9">
    <property type="interactions" value="2"/>
</dbReference>
<dbReference type="STRING" id="10116.ENSRNOP00000057733"/>
<dbReference type="GlyGen" id="Q9Z2J9">
    <property type="glycosylation" value="2 sites"/>
</dbReference>
<dbReference type="PaxDb" id="10116-ENSRNOP00000057733"/>
<dbReference type="UCSC" id="RGD:2282">
    <property type="organism name" value="rat"/>
</dbReference>
<dbReference type="AGR" id="RGD:2282"/>
<dbReference type="RGD" id="2282">
    <property type="gene designation" value="Runx2"/>
</dbReference>
<dbReference type="eggNOG" id="KOG3982">
    <property type="taxonomic scope" value="Eukaryota"/>
</dbReference>
<dbReference type="InParanoid" id="Q9Z2J9"/>
<dbReference type="PhylomeDB" id="Q9Z2J9"/>
<dbReference type="Proteomes" id="UP000002494">
    <property type="component" value="Unplaced"/>
</dbReference>
<dbReference type="GO" id="GO:0000785">
    <property type="term" value="C:chromatin"/>
    <property type="evidence" value="ECO:0000266"/>
    <property type="project" value="RGD"/>
</dbReference>
<dbReference type="GO" id="GO:0005737">
    <property type="term" value="C:cytoplasm"/>
    <property type="evidence" value="ECO:0000250"/>
    <property type="project" value="UniProtKB"/>
</dbReference>
<dbReference type="GO" id="GO:0005634">
    <property type="term" value="C:nucleus"/>
    <property type="evidence" value="ECO:0000250"/>
    <property type="project" value="UniProtKB"/>
</dbReference>
<dbReference type="GO" id="GO:0005667">
    <property type="term" value="C:transcription regulator complex"/>
    <property type="evidence" value="ECO:0000266"/>
    <property type="project" value="RGD"/>
</dbReference>
<dbReference type="GO" id="GO:0005524">
    <property type="term" value="F:ATP binding"/>
    <property type="evidence" value="ECO:0007669"/>
    <property type="project" value="InterPro"/>
</dbReference>
<dbReference type="GO" id="GO:0043425">
    <property type="term" value="F:bHLH transcription factor binding"/>
    <property type="evidence" value="ECO:0000266"/>
    <property type="project" value="RGD"/>
</dbReference>
<dbReference type="GO" id="GO:0003682">
    <property type="term" value="F:chromatin binding"/>
    <property type="evidence" value="ECO:0000266"/>
    <property type="project" value="RGD"/>
</dbReference>
<dbReference type="GO" id="GO:0031490">
    <property type="term" value="F:chromatin DNA binding"/>
    <property type="evidence" value="ECO:0000266"/>
    <property type="project" value="RGD"/>
</dbReference>
<dbReference type="GO" id="GO:0000987">
    <property type="term" value="F:cis-regulatory region sequence-specific DNA binding"/>
    <property type="evidence" value="ECO:0000266"/>
    <property type="project" value="RGD"/>
</dbReference>
<dbReference type="GO" id="GO:0001228">
    <property type="term" value="F:DNA-binding transcription activator activity, RNA polymerase II-specific"/>
    <property type="evidence" value="ECO:0000266"/>
    <property type="project" value="RGD"/>
</dbReference>
<dbReference type="GO" id="GO:0003700">
    <property type="term" value="F:DNA-binding transcription factor activity"/>
    <property type="evidence" value="ECO:0000266"/>
    <property type="project" value="RGD"/>
</dbReference>
<dbReference type="GO" id="GO:0140297">
    <property type="term" value="F:DNA-binding transcription factor binding"/>
    <property type="evidence" value="ECO:0000353"/>
    <property type="project" value="RGD"/>
</dbReference>
<dbReference type="GO" id="GO:0140296">
    <property type="term" value="F:general transcription initiation factor binding"/>
    <property type="evidence" value="ECO:0000353"/>
    <property type="project" value="RGD"/>
</dbReference>
<dbReference type="GO" id="GO:0042826">
    <property type="term" value="F:histone deacetylase binding"/>
    <property type="evidence" value="ECO:0000353"/>
    <property type="project" value="RGD"/>
</dbReference>
<dbReference type="GO" id="GO:0019904">
    <property type="term" value="F:protein domain specific binding"/>
    <property type="evidence" value="ECO:0000266"/>
    <property type="project" value="RGD"/>
</dbReference>
<dbReference type="GO" id="GO:0000978">
    <property type="term" value="F:RNA polymerase II cis-regulatory region sequence-specific DNA binding"/>
    <property type="evidence" value="ECO:0000266"/>
    <property type="project" value="RGD"/>
</dbReference>
<dbReference type="GO" id="GO:1990837">
    <property type="term" value="F:sequence-specific double-stranded DNA binding"/>
    <property type="evidence" value="ECO:0000266"/>
    <property type="project" value="RGD"/>
</dbReference>
<dbReference type="GO" id="GO:0000976">
    <property type="term" value="F:transcription cis-regulatory region binding"/>
    <property type="evidence" value="ECO:0000266"/>
    <property type="project" value="RGD"/>
</dbReference>
<dbReference type="GO" id="GO:0030509">
    <property type="term" value="P:BMP signaling pathway"/>
    <property type="evidence" value="ECO:0000266"/>
    <property type="project" value="RGD"/>
</dbReference>
<dbReference type="GO" id="GO:0030282">
    <property type="term" value="P:bone mineralization"/>
    <property type="evidence" value="ECO:0000266"/>
    <property type="project" value="RGD"/>
</dbReference>
<dbReference type="GO" id="GO:0048469">
    <property type="term" value="P:cell maturation"/>
    <property type="evidence" value="ECO:0000266"/>
    <property type="project" value="RGD"/>
</dbReference>
<dbReference type="GO" id="GO:0008283">
    <property type="term" value="P:cell population proliferation"/>
    <property type="evidence" value="ECO:0000266"/>
    <property type="project" value="RGD"/>
</dbReference>
<dbReference type="GO" id="GO:0044344">
    <property type="term" value="P:cellular response to fibroblast growth factor stimulus"/>
    <property type="evidence" value="ECO:0000270"/>
    <property type="project" value="RGD"/>
</dbReference>
<dbReference type="GO" id="GO:0034224">
    <property type="term" value="P:cellular response to zinc ion starvation"/>
    <property type="evidence" value="ECO:0000270"/>
    <property type="project" value="RGD"/>
</dbReference>
<dbReference type="GO" id="GO:0002063">
    <property type="term" value="P:chondrocyte development"/>
    <property type="evidence" value="ECO:0000266"/>
    <property type="project" value="RGD"/>
</dbReference>
<dbReference type="GO" id="GO:0002062">
    <property type="term" value="P:chondrocyte differentiation"/>
    <property type="evidence" value="ECO:0000266"/>
    <property type="project" value="RGD"/>
</dbReference>
<dbReference type="GO" id="GO:0048701">
    <property type="term" value="P:embryonic cranial skeleton morphogenesis"/>
    <property type="evidence" value="ECO:0000266"/>
    <property type="project" value="RGD"/>
</dbReference>
<dbReference type="GO" id="GO:0035115">
    <property type="term" value="P:embryonic forelimb morphogenesis"/>
    <property type="evidence" value="ECO:0000266"/>
    <property type="project" value="RGD"/>
</dbReference>
<dbReference type="GO" id="GO:0001958">
    <property type="term" value="P:endochondral ossification"/>
    <property type="evidence" value="ECO:0000266"/>
    <property type="project" value="RGD"/>
</dbReference>
<dbReference type="GO" id="GO:0050673">
    <property type="term" value="P:epithelial cell proliferation"/>
    <property type="evidence" value="ECO:0000266"/>
    <property type="project" value="RGD"/>
</dbReference>
<dbReference type="GO" id="GO:0010467">
    <property type="term" value="P:gene expression"/>
    <property type="evidence" value="ECO:0000266"/>
    <property type="project" value="RGD"/>
</dbReference>
<dbReference type="GO" id="GO:0036076">
    <property type="term" value="P:ligamentous ossification"/>
    <property type="evidence" value="ECO:0000266"/>
    <property type="project" value="RGD"/>
</dbReference>
<dbReference type="GO" id="GO:0045892">
    <property type="term" value="P:negative regulation of DNA-templated transcription"/>
    <property type="evidence" value="ECO:0000266"/>
    <property type="project" value="RGD"/>
</dbReference>
<dbReference type="GO" id="GO:0045879">
    <property type="term" value="P:negative regulation of smoothened signaling pathway"/>
    <property type="evidence" value="ECO:0000266"/>
    <property type="project" value="RGD"/>
</dbReference>
<dbReference type="GO" id="GO:0042475">
    <property type="term" value="P:odontogenesis of dentin-containing tooth"/>
    <property type="evidence" value="ECO:0000266"/>
    <property type="project" value="RGD"/>
</dbReference>
<dbReference type="GO" id="GO:0002076">
    <property type="term" value="P:osteoblast development"/>
    <property type="evidence" value="ECO:0000266"/>
    <property type="project" value="RGD"/>
</dbReference>
<dbReference type="GO" id="GO:0001649">
    <property type="term" value="P:osteoblast differentiation"/>
    <property type="evidence" value="ECO:0000315"/>
    <property type="project" value="RGD"/>
</dbReference>
<dbReference type="GO" id="GO:0002051">
    <property type="term" value="P:osteoblast fate commitment"/>
    <property type="evidence" value="ECO:0000266"/>
    <property type="project" value="RGD"/>
</dbReference>
<dbReference type="GO" id="GO:0008284">
    <property type="term" value="P:positive regulation of cell population proliferation"/>
    <property type="evidence" value="ECO:0000266"/>
    <property type="project" value="RGD"/>
</dbReference>
<dbReference type="GO" id="GO:0032332">
    <property type="term" value="P:positive regulation of chondrocyte differentiation"/>
    <property type="evidence" value="ECO:0000266"/>
    <property type="project" value="RGD"/>
</dbReference>
<dbReference type="GO" id="GO:0045893">
    <property type="term" value="P:positive regulation of DNA-templated transcription"/>
    <property type="evidence" value="ECO:0000266"/>
    <property type="project" value="RGD"/>
</dbReference>
<dbReference type="GO" id="GO:0050679">
    <property type="term" value="P:positive regulation of epithelial cell proliferation"/>
    <property type="evidence" value="ECO:0000266"/>
    <property type="project" value="RGD"/>
</dbReference>
<dbReference type="GO" id="GO:0010628">
    <property type="term" value="P:positive regulation of gene expression"/>
    <property type="evidence" value="ECO:0000266"/>
    <property type="project" value="RGD"/>
</dbReference>
<dbReference type="GO" id="GO:0045778">
    <property type="term" value="P:positive regulation of ossification"/>
    <property type="evidence" value="ECO:0000315"/>
    <property type="project" value="RGD"/>
</dbReference>
<dbReference type="GO" id="GO:0045669">
    <property type="term" value="P:positive regulation of osteoblast differentiation"/>
    <property type="evidence" value="ECO:0000250"/>
    <property type="project" value="UniProtKB"/>
</dbReference>
<dbReference type="GO" id="GO:2000648">
    <property type="term" value="P:positive regulation of stem cell proliferation"/>
    <property type="evidence" value="ECO:0000266"/>
    <property type="project" value="RGD"/>
</dbReference>
<dbReference type="GO" id="GO:0045944">
    <property type="term" value="P:positive regulation of transcription by RNA polymerase II"/>
    <property type="evidence" value="ECO:0000250"/>
    <property type="project" value="UniProtKB"/>
</dbReference>
<dbReference type="GO" id="GO:0040036">
    <property type="term" value="P:regulation of fibroblast growth factor receptor signaling pathway"/>
    <property type="evidence" value="ECO:0000266"/>
    <property type="project" value="RGD"/>
</dbReference>
<dbReference type="GO" id="GO:0010468">
    <property type="term" value="P:regulation of gene expression"/>
    <property type="evidence" value="ECO:0000266"/>
    <property type="project" value="RGD"/>
</dbReference>
<dbReference type="GO" id="GO:0042487">
    <property type="term" value="P:regulation of odontogenesis of dentin-containing tooth"/>
    <property type="evidence" value="ECO:0000266"/>
    <property type="project" value="RGD"/>
</dbReference>
<dbReference type="GO" id="GO:0030278">
    <property type="term" value="P:regulation of ossification"/>
    <property type="evidence" value="ECO:0000266"/>
    <property type="project" value="RGD"/>
</dbReference>
<dbReference type="GO" id="GO:0045667">
    <property type="term" value="P:regulation of osteoblast differentiation"/>
    <property type="evidence" value="ECO:0000266"/>
    <property type="project" value="RGD"/>
</dbReference>
<dbReference type="GO" id="GO:0032868">
    <property type="term" value="P:response to insulin"/>
    <property type="evidence" value="ECO:0000270"/>
    <property type="project" value="RGD"/>
</dbReference>
<dbReference type="GO" id="GO:1904383">
    <property type="term" value="P:response to sodium phosphate"/>
    <property type="evidence" value="ECO:0000266"/>
    <property type="project" value="RGD"/>
</dbReference>
<dbReference type="GO" id="GO:0001501">
    <property type="term" value="P:skeletal system development"/>
    <property type="evidence" value="ECO:0000266"/>
    <property type="project" value="RGD"/>
</dbReference>
<dbReference type="GO" id="GO:0048705">
    <property type="term" value="P:skeletal system morphogenesis"/>
    <property type="evidence" value="ECO:0000266"/>
    <property type="project" value="RGD"/>
</dbReference>
<dbReference type="GO" id="GO:0060395">
    <property type="term" value="P:SMAD protein signal transduction"/>
    <property type="evidence" value="ECO:0000266"/>
    <property type="project" value="RGD"/>
</dbReference>
<dbReference type="GO" id="GO:0007224">
    <property type="term" value="P:smoothened signaling pathway"/>
    <property type="evidence" value="ECO:0000266"/>
    <property type="project" value="RGD"/>
</dbReference>
<dbReference type="GO" id="GO:0048863">
    <property type="term" value="P:stem cell differentiation"/>
    <property type="evidence" value="ECO:0000266"/>
    <property type="project" value="RGD"/>
</dbReference>
<dbReference type="GO" id="GO:0072089">
    <property type="term" value="P:stem cell proliferation"/>
    <property type="evidence" value="ECO:0000266"/>
    <property type="project" value="RGD"/>
</dbReference>
<dbReference type="GO" id="GO:0030217">
    <property type="term" value="P:T cell differentiation"/>
    <property type="evidence" value="ECO:0000266"/>
    <property type="project" value="RGD"/>
</dbReference>
<dbReference type="FunFam" id="2.60.40.720:FF:000004">
    <property type="entry name" value="runt-related transcription factor 3"/>
    <property type="match status" value="1"/>
</dbReference>
<dbReference type="Gene3D" id="2.60.40.720">
    <property type="match status" value="1"/>
</dbReference>
<dbReference type="InterPro" id="IPR000040">
    <property type="entry name" value="AML1_Runt"/>
</dbReference>
<dbReference type="InterPro" id="IPR008967">
    <property type="entry name" value="p53-like_TF_DNA-bd_sf"/>
</dbReference>
<dbReference type="InterPro" id="IPR012346">
    <property type="entry name" value="p53/RUNT-type_TF_DNA-bd_sf"/>
</dbReference>
<dbReference type="InterPro" id="IPR013524">
    <property type="entry name" value="Runt_dom"/>
</dbReference>
<dbReference type="PANTHER" id="PTHR11950">
    <property type="entry name" value="RUNT RELATED"/>
    <property type="match status" value="1"/>
</dbReference>
<dbReference type="PANTHER" id="PTHR11950:SF7">
    <property type="entry name" value="RUNT-RELATED TRANSCRIPTION FACTOR 2"/>
    <property type="match status" value="1"/>
</dbReference>
<dbReference type="Pfam" id="PF00853">
    <property type="entry name" value="Runt"/>
    <property type="match status" value="1"/>
</dbReference>
<dbReference type="PRINTS" id="PR00967">
    <property type="entry name" value="ONCOGENEAML1"/>
</dbReference>
<dbReference type="SUPFAM" id="SSF49417">
    <property type="entry name" value="p53-like transcription factors"/>
    <property type="match status" value="1"/>
</dbReference>
<dbReference type="PROSITE" id="PS51062">
    <property type="entry name" value="RUNT"/>
    <property type="match status" value="1"/>
</dbReference>
<evidence type="ECO:0000250" key="1"/>
<evidence type="ECO:0000250" key="2">
    <source>
        <dbReference type="UniProtKB" id="Q08775"/>
    </source>
</evidence>
<evidence type="ECO:0000250" key="3">
    <source>
        <dbReference type="UniProtKB" id="Q13950"/>
    </source>
</evidence>
<evidence type="ECO:0000255" key="4">
    <source>
        <dbReference type="PROSITE-ProRule" id="PRU00399"/>
    </source>
</evidence>
<evidence type="ECO:0000256" key="5">
    <source>
        <dbReference type="SAM" id="MobiDB-lite"/>
    </source>
</evidence>
<evidence type="ECO:0000269" key="6">
    <source>
    </source>
</evidence>
<evidence type="ECO:0000305" key="7"/>
<keyword id="KW-0963">Cytoplasm</keyword>
<keyword id="KW-0221">Differentiation</keyword>
<keyword id="KW-0238">DNA-binding</keyword>
<keyword id="KW-1017">Isopeptide bond</keyword>
<keyword id="KW-0539">Nucleus</keyword>
<keyword id="KW-0597">Phosphoprotein</keyword>
<keyword id="KW-1185">Reference proteome</keyword>
<keyword id="KW-0804">Transcription</keyword>
<keyword id="KW-0805">Transcription regulation</keyword>
<keyword id="KW-0832">Ubl conjugation</keyword>
<gene>
    <name type="primary">Runx2</name>
    <name type="synonym">Cbfa1</name>
    <name type="synonym">Osf2</name>
</gene>
<organism>
    <name type="scientific">Rattus norvegicus</name>
    <name type="common">Rat</name>
    <dbReference type="NCBI Taxonomy" id="10116"/>
    <lineage>
        <taxon>Eukaryota</taxon>
        <taxon>Metazoa</taxon>
        <taxon>Chordata</taxon>
        <taxon>Craniata</taxon>
        <taxon>Vertebrata</taxon>
        <taxon>Euteleostomi</taxon>
        <taxon>Mammalia</taxon>
        <taxon>Eutheria</taxon>
        <taxon>Euarchontoglires</taxon>
        <taxon>Glires</taxon>
        <taxon>Rodentia</taxon>
        <taxon>Myomorpha</taxon>
        <taxon>Muroidea</taxon>
        <taxon>Muridae</taxon>
        <taxon>Murinae</taxon>
        <taxon>Rattus</taxon>
    </lineage>
</organism>
<name>RUNX2_RAT</name>
<accession>Q9Z2J9</accession>
<accession>Q99NC7</accession>
<comment type="function">
    <text evidence="3">Transcription factor involved in osteoblastic differentiation and skeletal morphogenesis. Essential for the maturation of osteoblasts and both intramembranous and endochondral ossification. CBF binds to the core site, 5'-PYGPYGGT-3', of a number of enhancers and promoters, including murine leukemia virus, polyomavirus enhancer, T-cell receptor enhancers, osteocalcin, osteopontin, bone sialoprotein, alpha 1(I) collagen, LCK, IL-3 and GM-CSF promoters. Inhibits KAT6B-dependent transcriptional activation. In osteoblasts, supports transcription activation: synergizes with SPEN/MINT to enhance FGFR2-mediated activation of the osteocalcin FGF-responsive element (OCFRE).</text>
</comment>
<comment type="subunit">
    <text evidence="2 3 6">Heterodimer of an alpha and a beta subunit. The alpha subunit binds DNA as a monomer and through the Runt domain. DNA-binding is increased by heterodimerization (By similarity). Interacts with XRCC6 (Ku70) and XRCC5 (Ku80). Interacts with CCNB1, KAT6A and KAT6B. Interacts with HIVEP3. Interacts with IFI204. Interaction with SATB2; the interaction results in enhanced DNA binding and transactivation by these transcription factors. Binds to HIPK3. Interacts with FOXO1 (via a C-terminal region); the interaction inhibits RUNX2 transcriptional activity towards BGLAP. Interacts with FOXP3. Interacts with TMEM119. Interacts with OLFM2 (PubMed:28062493). Interacts with IPO7; the interaction inhibits RUNX2 nuclear translocation in osteoblasts (By similarity).</text>
</comment>
<comment type="interaction">
    <interactant intactId="EBI-6119952">
        <id>Q9Z2J9</id>
    </interactant>
    <interactant intactId="EBI-15620127">
        <id>P25977</id>
        <label>Ubtf</label>
    </interactant>
    <organismsDiffer>false</organismsDiffer>
    <experiments>2</experiments>
</comment>
<comment type="subcellular location">
    <subcellularLocation>
        <location evidence="3">Nucleus</location>
    </subcellularLocation>
    <subcellularLocation>
        <location evidence="2">Cytoplasm</location>
    </subcellularLocation>
</comment>
<comment type="PTM">
    <text evidence="1">Phosphorylated; probably by MAP kinases (MAPK). Phosphorylation by HIPK3 is required for the SPEN/MINT and FGF2 transactivation during osteoblastic differentiation (By similarity).</text>
</comment>
<feature type="chain" id="PRO_0000174661" description="Runt-related transcription factor 2">
    <location>
        <begin position="1"/>
        <end position="218" status="greater than"/>
    </location>
</feature>
<feature type="domain" description="Runt" evidence="4">
    <location>
        <begin position="67"/>
        <end position="195"/>
    </location>
</feature>
<feature type="region of interest" description="Required for interaction with FOXO1" evidence="1">
    <location>
        <begin position="122"/>
        <end position="138"/>
    </location>
</feature>
<feature type="region of interest" description="Disordered" evidence="5">
    <location>
        <begin position="189"/>
        <end position="218"/>
    </location>
</feature>
<feature type="cross-link" description="Glycyl lysine isopeptide (Lys-Gly) (interchain with G-Cter in SUMO2)" evidence="3">
    <location>
        <position position="204"/>
    </location>
</feature>
<feature type="non-consecutive residues" evidence="7">
    <location>
        <begin position="98"/>
        <end position="99"/>
    </location>
</feature>
<feature type="non-terminal residue">
    <location>
        <position position="218"/>
    </location>
</feature>
<reference key="1">
    <citation type="journal article" date="1998" name="Gene">
        <title>Genomic structure and isoform expression of the mouse, rat and human Cbfa1/Osf2 transcription factor.</title>
        <authorList>
            <person name="Xiao Z.S."/>
            <person name="Thomas R."/>
            <person name="Hinson T.K."/>
            <person name="Quarles L.D."/>
        </authorList>
    </citation>
    <scope>NUCLEOTIDE SEQUENCE [GENOMIC DNA] OF 1-98</scope>
</reference>
<reference key="2">
    <citation type="submission" date="1999-04" db="EMBL/GenBank/DDBJ databases">
        <title>Regulatory expression of rat CBFA1 in osteoblastic cells.</title>
        <authorList>
            <person name="Goseki M.S."/>
            <person name="Iimura T."/>
        </authorList>
    </citation>
    <scope>NUCLEOTIDE SEQUENCE OF 99-218</scope>
    <source>
        <tissue>Osteoblast</tissue>
    </source>
</reference>
<reference key="3">
    <citation type="journal article" date="2017" name="Arterioscler. Thromb. Vasc. Biol.">
        <title>Olfactomedin 2 regulates smooth muscle phenotypic modulation and vascular remodeling through mediating Runt-related transcription factor 2 binding to serum response factor.</title>
        <authorList>
            <person name="Shi N."/>
            <person name="Li C.X."/>
            <person name="Cui X.B."/>
            <person name="Tomarev S.I."/>
            <person name="Chen S.Y."/>
        </authorList>
    </citation>
    <scope>INTERACTION WITH OLFM2</scope>
</reference>
<protein>
    <recommendedName>
        <fullName>Runt-related transcription factor 2</fullName>
    </recommendedName>
    <alternativeName>
        <fullName>Core-binding factor subunit alpha-1</fullName>
        <shortName>CBF-alpha-1</shortName>
    </alternativeName>
    <alternativeName>
        <fullName>Osteoblast-specific transcription factor 2</fullName>
        <shortName>OSF-2</shortName>
    </alternativeName>
</protein>
<proteinExistence type="evidence at protein level"/>
<sequence length="218" mass="24247">MLHSPHKQPQNHKCGANFLQEDSKEALVFKWLISAGHYQPPRPTESVSALSTVHAVIFKAASSIYNRGHKFYLEKKGGTMASNSLFSAVTPCQQSFFWNKTLPVAFKVVALGEVPDGTVVTVMAGNDENYSAELRNASAVMKNQVARFNDLRFVGRSGRGKSFTLTITVFTNPPQVATYHRAIKVTVDGPREPRRHRQKLDDSKPSLFSDRLSDLGRI</sequence>